<reference key="1">
    <citation type="book" date="1992" name="Recent advances in toxinology research">
        <editorList>
            <person name="Gopalakrishnakone P."/>
            <person name="Tan C.K."/>
        </editorList>
        <authorList>
            <person name="Mebs D."/>
            <person name="Claus I."/>
            <person name="Schroeter A."/>
            <person name="Takeya H."/>
            <person name="Iwanaga S."/>
        </authorList>
    </citation>
    <scope>PROTEIN SEQUENCE</scope>
</reference>
<reference key="2">
    <citation type="journal article" date="2009" name="Toxicon">
        <title>Molecular mechanism of pore formation by actinoporins.</title>
        <authorList>
            <person name="Kristan K.C."/>
            <person name="Viero G."/>
            <person name="Dalla Serra M."/>
            <person name="Macek P."/>
            <person name="Anderluh G."/>
        </authorList>
    </citation>
    <scope>REVIEW</scope>
</reference>
<evidence type="ECO:0000250" key="1">
    <source>
        <dbReference type="UniProtKB" id="B9W5G6"/>
    </source>
</evidence>
<evidence type="ECO:0000250" key="2">
    <source>
        <dbReference type="UniProtKB" id="P07845"/>
    </source>
</evidence>
<evidence type="ECO:0000250" key="3">
    <source>
        <dbReference type="UniProtKB" id="P61914"/>
    </source>
</evidence>
<evidence type="ECO:0000305" key="4"/>
<dbReference type="TCDB" id="1.C.38.1.6">
    <property type="family name" value="the pore-forming equinatoxin (equinatoxin) family"/>
</dbReference>
<dbReference type="GO" id="GO:0005576">
    <property type="term" value="C:extracellular region"/>
    <property type="evidence" value="ECO:0007669"/>
    <property type="project" value="UniProtKB-SubCell"/>
</dbReference>
<dbReference type="GO" id="GO:0042151">
    <property type="term" value="C:nematocyst"/>
    <property type="evidence" value="ECO:0007669"/>
    <property type="project" value="UniProtKB-SubCell"/>
</dbReference>
<dbReference type="GO" id="GO:0044218">
    <property type="term" value="C:other organism cell membrane"/>
    <property type="evidence" value="ECO:0007669"/>
    <property type="project" value="UniProtKB-KW"/>
</dbReference>
<dbReference type="GO" id="GO:0046930">
    <property type="term" value="C:pore complex"/>
    <property type="evidence" value="ECO:0007669"/>
    <property type="project" value="InterPro"/>
</dbReference>
<dbReference type="GO" id="GO:0015267">
    <property type="term" value="F:channel activity"/>
    <property type="evidence" value="ECO:0007669"/>
    <property type="project" value="InterPro"/>
</dbReference>
<dbReference type="GO" id="GO:0090729">
    <property type="term" value="F:toxin activity"/>
    <property type="evidence" value="ECO:0007669"/>
    <property type="project" value="UniProtKB-KW"/>
</dbReference>
<dbReference type="GO" id="GO:0051715">
    <property type="term" value="P:cytolysis in another organism"/>
    <property type="evidence" value="ECO:0007669"/>
    <property type="project" value="InterPro"/>
</dbReference>
<dbReference type="GO" id="GO:0006812">
    <property type="term" value="P:monoatomic cation transport"/>
    <property type="evidence" value="ECO:0007669"/>
    <property type="project" value="InterPro"/>
</dbReference>
<dbReference type="GO" id="GO:0046931">
    <property type="term" value="P:pore complex assembly"/>
    <property type="evidence" value="ECO:0007669"/>
    <property type="project" value="InterPro"/>
</dbReference>
<dbReference type="Gene3D" id="2.60.270.20">
    <property type="entry name" value="Cytolysin/lectin"/>
    <property type="match status" value="1"/>
</dbReference>
<dbReference type="InterPro" id="IPR009104">
    <property type="entry name" value="Anemon_actinoporin-like"/>
</dbReference>
<dbReference type="InterPro" id="IPR015926">
    <property type="entry name" value="Cytolysin/lectin"/>
</dbReference>
<dbReference type="Pfam" id="PF06369">
    <property type="entry name" value="Anemone_cytotox"/>
    <property type="match status" value="1"/>
</dbReference>
<dbReference type="SUPFAM" id="SSF63724">
    <property type="entry name" value="Cytolysin/lectin"/>
    <property type="match status" value="1"/>
</dbReference>
<comment type="function">
    <text>Pore-forming protein that forms cations-selective hydrophilic pores of around 1 nm and causes cytolysis. Pore formation is a multi-step process that involves specific recognition of membrane sphingomyelin (but neither cholesterol nor phosphatidylcholine) using aromatic rich region and adjacent phosphocholine (POC) binding site, firm binding to the membrane (mainly driven by hydrophobic interactions) accompanied by the transfer of the N-terminal region to the lipid-water interface and finally pore formation after oligomerization of monomers.</text>
</comment>
<comment type="subunit">
    <text evidence="1">Octamer or nonamer in membranes. Monomer in the soluble state.</text>
</comment>
<comment type="subcellular location">
    <subcellularLocation>
        <location evidence="1">Secreted</location>
    </subcellularLocation>
    <subcellularLocation>
        <location evidence="2">Nematocyst</location>
    </subcellularLocation>
    <subcellularLocation>
        <location evidence="1">Target cell membrane</location>
    </subcellularLocation>
    <text evidence="1">Forms an alpha-helical membrane channel in the prey.</text>
</comment>
<comment type="domain">
    <text evidence="3">Composed of a long N-terminal alpha-helix and a core region rich in beta-sheet structures. Before the pore formation, the alpha-helix binds the lipid membrane, partitions into the lipid-water interface and stabilizes the monomeric molecule on the membrane. Finally, it traverses the bilayer, thus forming the transmembrane pore.</text>
</comment>
<comment type="miscellaneous">
    <text evidence="4">A synonymy between H.magnifica and R.crispa is controversial.</text>
</comment>
<comment type="similarity">
    <text evidence="4">Belongs to the actinoporin family. Sea anemone subfamily.</text>
</comment>
<name>ACT20_HETMG</name>
<sequence length="54" mass="5546">SAALAGTIIAGASLGFQILDKVLGELGKVSRKIAIGVDNESIGSNTAWTXXXXW</sequence>
<organism>
    <name type="scientific">Heteractis magnifica</name>
    <name type="common">Magnificent sea anemone</name>
    <name type="synonym">Radianthus magnifica</name>
    <dbReference type="NCBI Taxonomy" id="38281"/>
    <lineage>
        <taxon>Eukaryota</taxon>
        <taxon>Metazoa</taxon>
        <taxon>Cnidaria</taxon>
        <taxon>Anthozoa</taxon>
        <taxon>Hexacorallia</taxon>
        <taxon>Actiniaria</taxon>
        <taxon>Stichodactylidae</taxon>
        <taxon>Heteractis</taxon>
    </lineage>
</organism>
<accession>P39088</accession>
<protein>
    <recommendedName>
        <fullName>Hemolytic toxin</fullName>
    </recommendedName>
    <alternativeName>
        <fullName>Cytolysin</fullName>
    </alternativeName>
    <alternativeName>
        <fullName evidence="4">DELTA-stichotoxin</fullName>
    </alternativeName>
</protein>
<proteinExistence type="evidence at protein level"/>
<keyword id="KW-0204">Cytolysis</keyword>
<keyword id="KW-0903">Direct protein sequencing</keyword>
<keyword id="KW-0406">Ion transport</keyword>
<keyword id="KW-0472">Membrane</keyword>
<keyword id="KW-0166">Nematocyst</keyword>
<keyword id="KW-0964">Secreted</keyword>
<keyword id="KW-1052">Target cell membrane</keyword>
<keyword id="KW-1053">Target membrane</keyword>
<keyword id="KW-0800">Toxin</keyword>
<keyword id="KW-0812">Transmembrane</keyword>
<keyword id="KW-0813">Transport</keyword>
<feature type="chain" id="PRO_0000221536" description="Hemolytic toxin">
    <location>
        <begin position="1"/>
        <end position="54" status="greater than"/>
    </location>
</feature>
<feature type="region of interest" description="Plays an important role in the hemolytic activity" evidence="2">
    <location>
        <begin position="3"/>
        <end position="12"/>
    </location>
</feature>
<feature type="region of interest" description="N-terminal region" evidence="3">
    <location>
        <begin position="11"/>
        <end position="30"/>
    </location>
</feature>
<feature type="non-terminal residue">
    <location>
        <position position="54"/>
    </location>
</feature>